<protein>
    <recommendedName>
        <fullName>Non-structural protein NS1</fullName>
    </recommendedName>
</protein>
<organismHost>
    <name type="scientific">Camelus dromedarius</name>
    <name type="common">Dromedary</name>
    <name type="synonym">Arabian camel</name>
    <dbReference type="NCBI Taxonomy" id="9838"/>
</organismHost>
<organismHost>
    <name type="scientific">Canis lupus familiaris</name>
    <name type="common">Dog</name>
    <name type="synonym">Canis familiaris</name>
    <dbReference type="NCBI Taxonomy" id="9615"/>
</organismHost>
<organismHost>
    <name type="scientific">Equus asinus</name>
    <name type="common">Donkey</name>
    <name type="synonym">Equus africanus asinus</name>
    <dbReference type="NCBI Taxonomy" id="9793"/>
</organismHost>
<organismHost>
    <name type="scientific">Equus caballus</name>
    <name type="common">Horse</name>
    <dbReference type="NCBI Taxonomy" id="9796"/>
</organismHost>
<organismHost>
    <name type="scientific">Equus hemionus</name>
    <name type="common">Onager</name>
    <name type="synonym">Asian wild ass</name>
    <dbReference type="NCBI Taxonomy" id="9794"/>
</organismHost>
<organismHost>
    <name type="scientific">Equus quagga burchellii</name>
    <name type="common">Burchell's zebra</name>
    <name type="synonym">Equus burchelli</name>
    <dbReference type="NCBI Taxonomy" id="89252"/>
</organismHost>
<organismHost>
    <name type="scientific">Loxodonta africana</name>
    <name type="common">African elephant</name>
    <dbReference type="NCBI Taxonomy" id="9785"/>
</organismHost>
<organism>
    <name type="scientific">African horse sickness virus 9</name>
    <name type="common">AHSV-9</name>
    <dbReference type="NCBI Taxonomy" id="10897"/>
    <lineage>
        <taxon>Viruses</taxon>
        <taxon>Riboviria</taxon>
        <taxon>Orthornavirae</taxon>
        <taxon>Duplornaviricota</taxon>
        <taxon>Resentoviricetes</taxon>
        <taxon>Reovirales</taxon>
        <taxon>Sedoreoviridae</taxon>
        <taxon>Orbivirus</taxon>
        <taxon>African horse sickness virus</taxon>
    </lineage>
</organism>
<gene>
    <name type="primary">Segment-5</name>
</gene>
<proteinExistence type="inferred from homology"/>
<reference key="1">
    <citation type="submission" date="1993-08" db="EMBL/GenBank/DDBJ databases">
        <authorList>
            <person name="Nel L.H."/>
        </authorList>
    </citation>
    <scope>NUCLEOTIDE SEQUENCE</scope>
</reference>
<name>VNS1_AHSV9</name>
<comment type="similarity">
    <text evidence="1">Belongs to the orbivirus non-structural protein NS1 family.</text>
</comment>
<dbReference type="EMBL" id="U01069">
    <property type="protein sequence ID" value="AAA16200.1"/>
    <property type="molecule type" value="Unassigned_DNA"/>
</dbReference>
<dbReference type="SMR" id="Q85967"/>
<dbReference type="InterPro" id="IPR002630">
    <property type="entry name" value="Orbi_NS1"/>
</dbReference>
<dbReference type="Pfam" id="PF01718">
    <property type="entry name" value="Orbi_NS1"/>
    <property type="match status" value="1"/>
</dbReference>
<sequence length="548" mass="63377">MDRLLTYFQVRGERANAVRLFGEISEQIDCSHLKRDCFVNGICARQHFKECCNIATDNGSRTNADKLVALAMRALLDRQTIWACVIKNADYVSQYADEQMEEEVNKLYDVYLQSGTREEFEGFRQRSRPSRVVMDDSCSMLSYFYIPMNQGNPAPVAKLSRWGQFGICYYDRTNVDGLIPYDEIGLAQAIDGLKDLIEGRLPVCPYTGVNSRINAVLHLPLEMEVIMAVQENATQLMRRAAQDFKFITHAGWKLYPRLLRQRFAIGDACGGVIHHVMLGHLRYYDGDTSIVKYCFLYDGSLDWRTWTVPLHLMRTARLGHLQPESILFFMHKSLRVRYVLWLTSLCLTQSQWLIQKLPELTGGTDVFYTRAYVHAENHKVPNDRDLMMNEVFRKIDDHWVIQKCHTTKEAITVTAIQIQRSIRGDGQWDTPMFHQSMALLTRLIVYWLTDVTERSAIFRLTCYAIFGCKPTARGRYIDWDDLGTFMKNVLDGRDLTVLEDETCFISMMRMAMLHVRRSKVVCATVLEAPLEIQQVGQIVEVPFDFMHN</sequence>
<evidence type="ECO:0000305" key="1"/>
<accession>Q85967</accession>
<feature type="chain" id="PRO_0000222672" description="Non-structural protein NS1">
    <location>
        <begin position="1"/>
        <end position="548"/>
    </location>
</feature>